<proteinExistence type="inferred from homology"/>
<gene>
    <name evidence="1" type="primary">proS</name>
    <name type="ordered locus">Mvan_2308</name>
</gene>
<sequence length="585" mass="63828">MITRMSELFLRTLRDDPADAEVPSHKLLIRAGYVRPVGPGLYSWLPLGLKVLRKIENIVRNEMNAIGGQEILFPALLPRAPYETTNRWTEYGDTLFRLQDRRNNDYLLGPTHEEMFTLTVKGEYSSYKDFPLRLYQIQNKYRDEARPRAGILRGREFLMKDSYSFDIDDDGLKNAYIAHREAYQRIFDLLKVRYVIVSAVSGAMGGSASEEFLAESDVGEDTYVRCLQSGYAANVEAVVTMVPEPISSEQIAGLASATVHHTGDTPTIATLVDWANGADLGRTVTAADTLKNVMLKVREPGGEWELLGVGVPGDREVDDKRLGAALEPAEYAMLDDADFARYPFLVKGYIGPKALLANGVRYLVDPRVVDGTAWITGADELGKHVVDLVAGRDFTPDGTIEAAEVREGDPSPDGAGPLVAARGIEIGHVFQLGRKYADAFGADVLGENGKPVRLTMGSYGIGVSRLVAVIAEQHHDELGLRWPSTVSPFDVHVVIANKDADARTGATELAAELDRLGVDVLLDDRTASPGVKFKDAELLGVPWIVVVGRGWADGIVELRDRFGGDKHEIPVDGAAERISAALAGA</sequence>
<feature type="chain" id="PRO_0000288354" description="Proline--tRNA ligase">
    <location>
        <begin position="1"/>
        <end position="585"/>
    </location>
</feature>
<reference key="1">
    <citation type="submission" date="2006-12" db="EMBL/GenBank/DDBJ databases">
        <title>Complete sequence of Mycobacterium vanbaalenii PYR-1.</title>
        <authorList>
            <consortium name="US DOE Joint Genome Institute"/>
            <person name="Copeland A."/>
            <person name="Lucas S."/>
            <person name="Lapidus A."/>
            <person name="Barry K."/>
            <person name="Detter J.C."/>
            <person name="Glavina del Rio T."/>
            <person name="Hammon N."/>
            <person name="Israni S."/>
            <person name="Dalin E."/>
            <person name="Tice H."/>
            <person name="Pitluck S."/>
            <person name="Singan V."/>
            <person name="Schmutz J."/>
            <person name="Larimer F."/>
            <person name="Land M."/>
            <person name="Hauser L."/>
            <person name="Kyrpides N."/>
            <person name="Anderson I.J."/>
            <person name="Miller C."/>
            <person name="Richardson P."/>
        </authorList>
    </citation>
    <scope>NUCLEOTIDE SEQUENCE [LARGE SCALE GENOMIC DNA]</scope>
    <source>
        <strain>DSM 7251 / JCM 13017 / BCRC 16820 / KCTC 9966 / NRRL B-24157 / PYR-1</strain>
    </source>
</reference>
<evidence type="ECO:0000255" key="1">
    <source>
        <dbReference type="HAMAP-Rule" id="MF_01569"/>
    </source>
</evidence>
<comment type="function">
    <text evidence="1">Catalyzes the attachment of proline to tRNA(Pro) in a two-step reaction: proline is first activated by ATP to form Pro-AMP and then transferred to the acceptor end of tRNA(Pro). As ProRS can inadvertently accommodate and process non-cognate amino acids such as alanine and cysteine, to avoid such errors it has two additional distinct editing activities against alanine. One activity is designated as 'pretransfer' editing and involves the tRNA(Pro)-independent hydrolysis of activated Ala-AMP. The other activity is designated 'posttransfer' editing and involves deacylation of mischarged Ala-tRNA(Pro). The misacylated Cys-tRNA(Pro) is not edited by ProRS.</text>
</comment>
<comment type="catalytic activity">
    <reaction evidence="1">
        <text>tRNA(Pro) + L-proline + ATP = L-prolyl-tRNA(Pro) + AMP + diphosphate</text>
        <dbReference type="Rhea" id="RHEA:14305"/>
        <dbReference type="Rhea" id="RHEA-COMP:9700"/>
        <dbReference type="Rhea" id="RHEA-COMP:9702"/>
        <dbReference type="ChEBI" id="CHEBI:30616"/>
        <dbReference type="ChEBI" id="CHEBI:33019"/>
        <dbReference type="ChEBI" id="CHEBI:60039"/>
        <dbReference type="ChEBI" id="CHEBI:78442"/>
        <dbReference type="ChEBI" id="CHEBI:78532"/>
        <dbReference type="ChEBI" id="CHEBI:456215"/>
        <dbReference type="EC" id="6.1.1.15"/>
    </reaction>
</comment>
<comment type="subunit">
    <text evidence="1">Homodimer.</text>
</comment>
<comment type="subcellular location">
    <subcellularLocation>
        <location evidence="1">Cytoplasm</location>
    </subcellularLocation>
</comment>
<comment type="domain">
    <text evidence="1">Consists of three domains: the N-terminal catalytic domain, the editing domain and the C-terminal anticodon-binding domain.</text>
</comment>
<comment type="similarity">
    <text evidence="1">Belongs to the class-II aminoacyl-tRNA synthetase family. ProS type 1 subfamily.</text>
</comment>
<dbReference type="EC" id="6.1.1.15" evidence="1"/>
<dbReference type="EMBL" id="CP000511">
    <property type="protein sequence ID" value="ABM13122.1"/>
    <property type="molecule type" value="Genomic_DNA"/>
</dbReference>
<dbReference type="RefSeq" id="WP_011779534.1">
    <property type="nucleotide sequence ID" value="NC_008726.1"/>
</dbReference>
<dbReference type="SMR" id="A1T7H2"/>
<dbReference type="STRING" id="350058.Mvan_2308"/>
<dbReference type="KEGG" id="mva:Mvan_2308"/>
<dbReference type="eggNOG" id="COG0442">
    <property type="taxonomic scope" value="Bacteria"/>
</dbReference>
<dbReference type="HOGENOM" id="CLU_016739_0_0_11"/>
<dbReference type="Proteomes" id="UP000009159">
    <property type="component" value="Chromosome"/>
</dbReference>
<dbReference type="GO" id="GO:0005829">
    <property type="term" value="C:cytosol"/>
    <property type="evidence" value="ECO:0007669"/>
    <property type="project" value="TreeGrafter"/>
</dbReference>
<dbReference type="GO" id="GO:0002161">
    <property type="term" value="F:aminoacyl-tRNA deacylase activity"/>
    <property type="evidence" value="ECO:0007669"/>
    <property type="project" value="InterPro"/>
</dbReference>
<dbReference type="GO" id="GO:0005524">
    <property type="term" value="F:ATP binding"/>
    <property type="evidence" value="ECO:0007669"/>
    <property type="project" value="UniProtKB-UniRule"/>
</dbReference>
<dbReference type="GO" id="GO:0004827">
    <property type="term" value="F:proline-tRNA ligase activity"/>
    <property type="evidence" value="ECO:0007669"/>
    <property type="project" value="UniProtKB-UniRule"/>
</dbReference>
<dbReference type="GO" id="GO:0006433">
    <property type="term" value="P:prolyl-tRNA aminoacylation"/>
    <property type="evidence" value="ECO:0007669"/>
    <property type="project" value="UniProtKB-UniRule"/>
</dbReference>
<dbReference type="CDD" id="cd00861">
    <property type="entry name" value="ProRS_anticodon_short"/>
    <property type="match status" value="1"/>
</dbReference>
<dbReference type="CDD" id="cd00779">
    <property type="entry name" value="ProRS_core_prok"/>
    <property type="match status" value="1"/>
</dbReference>
<dbReference type="FunFam" id="3.30.930.10:FF:000065">
    <property type="entry name" value="Proline--tRNA ligase"/>
    <property type="match status" value="1"/>
</dbReference>
<dbReference type="FunFam" id="3.30.930.10:FF:000070">
    <property type="entry name" value="Proline--tRNA ligase"/>
    <property type="match status" value="1"/>
</dbReference>
<dbReference type="Gene3D" id="3.40.50.800">
    <property type="entry name" value="Anticodon-binding domain"/>
    <property type="match status" value="1"/>
</dbReference>
<dbReference type="Gene3D" id="3.30.930.10">
    <property type="entry name" value="Bira Bifunctional Protein, Domain 2"/>
    <property type="match status" value="2"/>
</dbReference>
<dbReference type="HAMAP" id="MF_01569">
    <property type="entry name" value="Pro_tRNA_synth_type1"/>
    <property type="match status" value="1"/>
</dbReference>
<dbReference type="InterPro" id="IPR002314">
    <property type="entry name" value="aa-tRNA-synt_IIb"/>
</dbReference>
<dbReference type="InterPro" id="IPR006195">
    <property type="entry name" value="aa-tRNA-synth_II"/>
</dbReference>
<dbReference type="InterPro" id="IPR045864">
    <property type="entry name" value="aa-tRNA-synth_II/BPL/LPL"/>
</dbReference>
<dbReference type="InterPro" id="IPR004154">
    <property type="entry name" value="Anticodon-bd"/>
</dbReference>
<dbReference type="InterPro" id="IPR036621">
    <property type="entry name" value="Anticodon-bd_dom_sf"/>
</dbReference>
<dbReference type="InterPro" id="IPR002316">
    <property type="entry name" value="Pro-tRNA-ligase_IIa"/>
</dbReference>
<dbReference type="InterPro" id="IPR004500">
    <property type="entry name" value="Pro-tRNA-synth_IIa_bac-type"/>
</dbReference>
<dbReference type="InterPro" id="IPR023717">
    <property type="entry name" value="Pro-tRNA-Synthase_IIa_type1"/>
</dbReference>
<dbReference type="InterPro" id="IPR050062">
    <property type="entry name" value="Pro-tRNA_synthetase"/>
</dbReference>
<dbReference type="InterPro" id="IPR044140">
    <property type="entry name" value="ProRS_anticodon_short"/>
</dbReference>
<dbReference type="InterPro" id="IPR033730">
    <property type="entry name" value="ProRS_core_prok"/>
</dbReference>
<dbReference type="InterPro" id="IPR036754">
    <property type="entry name" value="YbaK/aa-tRNA-synt-asso_dom_sf"/>
</dbReference>
<dbReference type="InterPro" id="IPR007214">
    <property type="entry name" value="YbaK/aa-tRNA-synth-assoc-dom"/>
</dbReference>
<dbReference type="NCBIfam" id="NF006625">
    <property type="entry name" value="PRK09194.1"/>
    <property type="match status" value="1"/>
</dbReference>
<dbReference type="NCBIfam" id="TIGR00409">
    <property type="entry name" value="proS_fam_II"/>
    <property type="match status" value="1"/>
</dbReference>
<dbReference type="PANTHER" id="PTHR42753">
    <property type="entry name" value="MITOCHONDRIAL RIBOSOME PROTEIN L39/PROLYL-TRNA LIGASE FAMILY MEMBER"/>
    <property type="match status" value="1"/>
</dbReference>
<dbReference type="PANTHER" id="PTHR42753:SF2">
    <property type="entry name" value="PROLINE--TRNA LIGASE"/>
    <property type="match status" value="1"/>
</dbReference>
<dbReference type="Pfam" id="PF03129">
    <property type="entry name" value="HGTP_anticodon"/>
    <property type="match status" value="1"/>
</dbReference>
<dbReference type="Pfam" id="PF00587">
    <property type="entry name" value="tRNA-synt_2b"/>
    <property type="match status" value="1"/>
</dbReference>
<dbReference type="Pfam" id="PF04073">
    <property type="entry name" value="tRNA_edit"/>
    <property type="match status" value="1"/>
</dbReference>
<dbReference type="PRINTS" id="PR01046">
    <property type="entry name" value="TRNASYNTHPRO"/>
</dbReference>
<dbReference type="SUPFAM" id="SSF52954">
    <property type="entry name" value="Class II aaRS ABD-related"/>
    <property type="match status" value="1"/>
</dbReference>
<dbReference type="SUPFAM" id="SSF55681">
    <property type="entry name" value="Class II aaRS and biotin synthetases"/>
    <property type="match status" value="1"/>
</dbReference>
<dbReference type="SUPFAM" id="SSF55826">
    <property type="entry name" value="YbaK/ProRS associated domain"/>
    <property type="match status" value="1"/>
</dbReference>
<dbReference type="PROSITE" id="PS50862">
    <property type="entry name" value="AA_TRNA_LIGASE_II"/>
    <property type="match status" value="1"/>
</dbReference>
<organism>
    <name type="scientific">Mycolicibacterium vanbaalenii (strain DSM 7251 / JCM 13017 / BCRC 16820 / KCTC 9966 / NRRL B-24157 / PYR-1)</name>
    <name type="common">Mycobacterium vanbaalenii</name>
    <dbReference type="NCBI Taxonomy" id="350058"/>
    <lineage>
        <taxon>Bacteria</taxon>
        <taxon>Bacillati</taxon>
        <taxon>Actinomycetota</taxon>
        <taxon>Actinomycetes</taxon>
        <taxon>Mycobacteriales</taxon>
        <taxon>Mycobacteriaceae</taxon>
        <taxon>Mycolicibacterium</taxon>
    </lineage>
</organism>
<accession>A1T7H2</accession>
<protein>
    <recommendedName>
        <fullName evidence="1">Proline--tRNA ligase</fullName>
        <ecNumber evidence="1">6.1.1.15</ecNumber>
    </recommendedName>
    <alternativeName>
        <fullName evidence="1">Prolyl-tRNA synthetase</fullName>
        <shortName evidence="1">ProRS</shortName>
    </alternativeName>
</protein>
<keyword id="KW-0030">Aminoacyl-tRNA synthetase</keyword>
<keyword id="KW-0067">ATP-binding</keyword>
<keyword id="KW-0963">Cytoplasm</keyword>
<keyword id="KW-0436">Ligase</keyword>
<keyword id="KW-0547">Nucleotide-binding</keyword>
<keyword id="KW-0648">Protein biosynthesis</keyword>
<name>SYP_MYCVP</name>